<protein>
    <recommendedName>
        <fullName>Tyrosine 3-monooxygenase</fullName>
        <ecNumber>1.14.16.2</ecNumber>
    </recommendedName>
    <alternativeName>
        <fullName>Tyrosine 3-hydroxylase</fullName>
        <shortName>TH</shortName>
    </alternativeName>
</protein>
<feature type="chain" id="PRO_0000205563" description="Tyrosine 3-monooxygenase">
    <location>
        <begin position="1"/>
        <end position="491"/>
    </location>
</feature>
<feature type="binding site" evidence="1">
    <location>
        <position position="324"/>
    </location>
    <ligand>
        <name>Fe cation</name>
        <dbReference type="ChEBI" id="CHEBI:24875"/>
    </ligand>
</feature>
<feature type="binding site" evidence="1">
    <location>
        <position position="329"/>
    </location>
    <ligand>
        <name>Fe cation</name>
        <dbReference type="ChEBI" id="CHEBI:24875"/>
    </ligand>
</feature>
<feature type="binding site" evidence="1">
    <location>
        <position position="369"/>
    </location>
    <ligand>
        <name>Fe cation</name>
        <dbReference type="ChEBI" id="CHEBI:24875"/>
    </ligand>
</feature>
<feature type="modified residue" description="Phosphoserine" evidence="1">
    <location>
        <position position="19"/>
    </location>
</feature>
<feature type="modified residue" description="Phosphoserine" evidence="1">
    <location>
        <position position="31"/>
    </location>
</feature>
<feature type="modified residue" description="Phosphoserine; by PKA" evidence="1">
    <location>
        <position position="40"/>
    </location>
</feature>
<gene>
    <name type="primary">TH</name>
</gene>
<dbReference type="EC" id="1.14.16.2"/>
<dbReference type="EMBL" id="M24778">
    <property type="protein sequence ID" value="AAA49514.1"/>
    <property type="molecule type" value="Genomic_DNA"/>
</dbReference>
<dbReference type="EMBL" id="S50878">
    <property type="status" value="NOT_ANNOTATED_CDS"/>
    <property type="molecule type" value="Genomic_DNA"/>
</dbReference>
<dbReference type="PIR" id="A28582">
    <property type="entry name" value="A28582"/>
</dbReference>
<dbReference type="SMR" id="P11982"/>
<dbReference type="UniPathway" id="UPA00747">
    <property type="reaction ID" value="UER00733"/>
</dbReference>
<dbReference type="GO" id="GO:0030424">
    <property type="term" value="C:axon"/>
    <property type="evidence" value="ECO:0007669"/>
    <property type="project" value="UniProtKB-SubCell"/>
</dbReference>
<dbReference type="GO" id="GO:0005737">
    <property type="term" value="C:cytoplasm"/>
    <property type="evidence" value="ECO:0000250"/>
    <property type="project" value="AgBase"/>
</dbReference>
<dbReference type="GO" id="GO:0043204">
    <property type="term" value="C:perikaryon"/>
    <property type="evidence" value="ECO:0007669"/>
    <property type="project" value="TreeGrafter"/>
</dbReference>
<dbReference type="GO" id="GO:0048471">
    <property type="term" value="C:perinuclear region of cytoplasm"/>
    <property type="evidence" value="ECO:0007669"/>
    <property type="project" value="UniProtKB-SubCell"/>
</dbReference>
<dbReference type="GO" id="GO:0005506">
    <property type="term" value="F:iron ion binding"/>
    <property type="evidence" value="ECO:0007669"/>
    <property type="project" value="InterPro"/>
</dbReference>
<dbReference type="GO" id="GO:0004511">
    <property type="term" value="F:tyrosine 3-monooxygenase activity"/>
    <property type="evidence" value="ECO:0000250"/>
    <property type="project" value="AgBase"/>
</dbReference>
<dbReference type="GO" id="GO:0007619">
    <property type="term" value="P:courtship behavior"/>
    <property type="evidence" value="ECO:0000250"/>
    <property type="project" value="AgBase"/>
</dbReference>
<dbReference type="GO" id="GO:0006585">
    <property type="term" value="P:dopamine biosynthetic process from tyrosine"/>
    <property type="evidence" value="ECO:0007669"/>
    <property type="project" value="TreeGrafter"/>
</dbReference>
<dbReference type="GO" id="GO:0007625">
    <property type="term" value="P:grooming behavior"/>
    <property type="evidence" value="ECO:0000250"/>
    <property type="project" value="AgBase"/>
</dbReference>
<dbReference type="GO" id="GO:0060416">
    <property type="term" value="P:response to growth hormone"/>
    <property type="evidence" value="ECO:0000250"/>
    <property type="project" value="AgBase"/>
</dbReference>
<dbReference type="GO" id="GO:0035176">
    <property type="term" value="P:social behavior"/>
    <property type="evidence" value="ECO:0000250"/>
    <property type="project" value="AgBase"/>
</dbReference>
<dbReference type="GO" id="GO:0071625">
    <property type="term" value="P:vocalization behavior"/>
    <property type="evidence" value="ECO:0000250"/>
    <property type="project" value="AgBase"/>
</dbReference>
<dbReference type="CDD" id="cd03345">
    <property type="entry name" value="eu_TyrOH"/>
    <property type="match status" value="1"/>
</dbReference>
<dbReference type="FunFam" id="1.10.800.10:FF:000002">
    <property type="entry name" value="Tyrosine 3-monooxygenase"/>
    <property type="match status" value="1"/>
</dbReference>
<dbReference type="FunFam" id="3.30.70.260:FF:000024">
    <property type="entry name" value="Tyrosine 3-monooxygenase"/>
    <property type="match status" value="1"/>
</dbReference>
<dbReference type="Gene3D" id="3.30.70.260">
    <property type="match status" value="1"/>
</dbReference>
<dbReference type="Gene3D" id="1.10.800.10">
    <property type="entry name" value="Aromatic amino acid hydroxylase"/>
    <property type="match status" value="1"/>
</dbReference>
<dbReference type="InterPro" id="IPR045865">
    <property type="entry name" value="ACT-like_dom_sf"/>
</dbReference>
<dbReference type="InterPro" id="IPR001273">
    <property type="entry name" value="ArAA_hydroxylase"/>
</dbReference>
<dbReference type="InterPro" id="IPR018301">
    <property type="entry name" value="ArAA_hydroxylase_Fe/CU_BS"/>
</dbReference>
<dbReference type="InterPro" id="IPR036951">
    <property type="entry name" value="ArAA_hydroxylase_sf"/>
</dbReference>
<dbReference type="InterPro" id="IPR036329">
    <property type="entry name" value="Aro-AA_hydroxylase_C_sf"/>
</dbReference>
<dbReference type="InterPro" id="IPR019774">
    <property type="entry name" value="Aromatic-AA_hydroxylase_C"/>
</dbReference>
<dbReference type="InterPro" id="IPR041903">
    <property type="entry name" value="Eu_TyrOH_cat"/>
</dbReference>
<dbReference type="InterPro" id="IPR049321">
    <property type="entry name" value="TH_ACT"/>
</dbReference>
<dbReference type="InterPro" id="IPR005962">
    <property type="entry name" value="Tyr_3_mOase"/>
</dbReference>
<dbReference type="InterPro" id="IPR019773">
    <property type="entry name" value="Tyrosine_3-monooxygenase-like"/>
</dbReference>
<dbReference type="InterPro" id="IPR021164">
    <property type="entry name" value="Tyrosine_hydroxylase_CS"/>
</dbReference>
<dbReference type="NCBIfam" id="TIGR01269">
    <property type="entry name" value="Tyr_3_monoox"/>
    <property type="match status" value="1"/>
</dbReference>
<dbReference type="PANTHER" id="PTHR11473">
    <property type="entry name" value="AROMATIC AMINO ACID HYDROXYLASE"/>
    <property type="match status" value="1"/>
</dbReference>
<dbReference type="PANTHER" id="PTHR11473:SF18">
    <property type="entry name" value="TYROSINE 3-MONOOXYGENASE"/>
    <property type="match status" value="1"/>
</dbReference>
<dbReference type="Pfam" id="PF00351">
    <property type="entry name" value="Biopterin_H"/>
    <property type="match status" value="1"/>
</dbReference>
<dbReference type="Pfam" id="PF21417">
    <property type="entry name" value="TH_ACT"/>
    <property type="match status" value="1"/>
</dbReference>
<dbReference type="Pfam" id="PF12549">
    <property type="entry name" value="TOH_N"/>
    <property type="match status" value="2"/>
</dbReference>
<dbReference type="PIRSF" id="PIRSF000336">
    <property type="entry name" value="TH"/>
    <property type="match status" value="1"/>
</dbReference>
<dbReference type="PRINTS" id="PR00372">
    <property type="entry name" value="FYWHYDRXLASE"/>
</dbReference>
<dbReference type="SUPFAM" id="SSF55021">
    <property type="entry name" value="ACT-like"/>
    <property type="match status" value="1"/>
</dbReference>
<dbReference type="SUPFAM" id="SSF56534">
    <property type="entry name" value="Aromatic aminoacid monoxygenases, catalytic and oligomerization domains"/>
    <property type="match status" value="1"/>
</dbReference>
<dbReference type="PROSITE" id="PS00367">
    <property type="entry name" value="BH4_AAA_HYDROXYL_1"/>
    <property type="match status" value="1"/>
</dbReference>
<dbReference type="PROSITE" id="PS51410">
    <property type="entry name" value="BH4_AAA_HYDROXYL_2"/>
    <property type="match status" value="1"/>
</dbReference>
<keyword id="KW-0127">Catecholamine biosynthesis</keyword>
<keyword id="KW-0966">Cell projection</keyword>
<keyword id="KW-0963">Cytoplasm</keyword>
<keyword id="KW-0408">Iron</keyword>
<keyword id="KW-0479">Metal-binding</keyword>
<keyword id="KW-0503">Monooxygenase</keyword>
<keyword id="KW-0530">Neurotransmitter biosynthesis</keyword>
<keyword id="KW-0560">Oxidoreductase</keyword>
<keyword id="KW-0597">Phosphoprotein</keyword>
<accession>P11982</accession>
<comment type="function">
    <text>Plays an important role in the physiology of adrenergic neurons.</text>
</comment>
<comment type="catalytic activity">
    <reaction>
        <text>(6R)-L-erythro-5,6,7,8-tetrahydrobiopterin + L-tyrosine + O2 = (4aS,6R)-4a-hydroxy-L-erythro-5,6,7,8-tetrahydrobiopterin + L-dopa</text>
        <dbReference type="Rhea" id="RHEA:18201"/>
        <dbReference type="ChEBI" id="CHEBI:15379"/>
        <dbReference type="ChEBI" id="CHEBI:15642"/>
        <dbReference type="ChEBI" id="CHEBI:57504"/>
        <dbReference type="ChEBI" id="CHEBI:58315"/>
        <dbReference type="ChEBI" id="CHEBI:59560"/>
        <dbReference type="EC" id="1.14.16.2"/>
    </reaction>
</comment>
<comment type="cofactor">
    <cofactor>
        <name>Fe(2+)</name>
        <dbReference type="ChEBI" id="CHEBI:29033"/>
    </cofactor>
</comment>
<comment type="activity regulation">
    <text evidence="2">Phosphorylation leads to an increase in the catalytic activity.</text>
</comment>
<comment type="pathway">
    <text>Catecholamine biosynthesis; dopamine biosynthesis; dopamine from L-tyrosine: step 1/2.</text>
</comment>
<comment type="subcellular location">
    <subcellularLocation>
        <location evidence="3">Cytoplasm</location>
        <location evidence="3">Perinuclear region</location>
    </subcellularLocation>
    <subcellularLocation>
        <location evidence="3">Cell projection</location>
        <location evidence="3">Axon</location>
    </subcellularLocation>
    <text evidence="3">Expressed in dopaminergic axons and axon terminals.</text>
</comment>
<comment type="similarity">
    <text evidence="4">Belongs to the biopterin-dependent aromatic amino acid hydroxylase family.</text>
</comment>
<sequence length="491" mass="56066">MPTPNISTSAAKGFRRAVSELDSKQAEAIMSPRFIGRRQSLIEDARKEREAAAAATDAAESTETIVFEEKDGRAMLNLFFMLKGVKTSPLSRALKVFETFEAKIHHLETRLSRKPREGTAELEYFVRCEVHSSDLNTFISSIKRVAEDVRTTKEDKFHWFPRKICELDKCHHLVTKFDPDLDLDHPGYSDQVYRQRRKSIAEIAFHYKHGDPIPRVEYTAEETATWKEVYSTLKSLYPTHACKEYLEAFNLLEKFCGYNENNIPQLEEVSRFLKERTGFQLRPVRGLLSARDFLASLAFRVFQCTQYIRHASSPMHSPEPDCCHELLGHVPMLADKTFAQFSQDIGLASLGATDEEIEKLATLYWFTVEFGLCRQNGIVKAYGAGLLSSYGELIHSLSDEPEVRDFDPDAAAVQPCQDQPYQPVYFVSESFSDAKNKLRNYAAHIKRPFSVKYEPYTHSIELLDSPQTICHSLESVRDELHTLINALNVIS</sequence>
<name>TY3H_PHASP</name>
<organism>
    <name type="scientific">Phasianidae sp.</name>
    <name type="common">Quail</name>
    <dbReference type="NCBI Taxonomy" id="9006"/>
    <lineage>
        <taxon>Eukaryota</taxon>
        <taxon>Metazoa</taxon>
        <taxon>Chordata</taxon>
        <taxon>Craniata</taxon>
        <taxon>Vertebrata</taxon>
        <taxon>Euteleostomi</taxon>
        <taxon>Archelosauria</taxon>
        <taxon>Archosauria</taxon>
        <taxon>Dinosauria</taxon>
        <taxon>Saurischia</taxon>
        <taxon>Theropoda</taxon>
        <taxon>Coelurosauria</taxon>
        <taxon>Aves</taxon>
        <taxon>Neognathae</taxon>
        <taxon>Galloanserae</taxon>
        <taxon>Galliformes</taxon>
        <taxon>Phasianidae</taxon>
    </lineage>
</organism>
<evidence type="ECO:0000250" key="1"/>
<evidence type="ECO:0000250" key="2">
    <source>
        <dbReference type="UniProtKB" id="P07101"/>
    </source>
</evidence>
<evidence type="ECO:0000250" key="3">
    <source>
        <dbReference type="UniProtKB" id="P24529"/>
    </source>
</evidence>
<evidence type="ECO:0000305" key="4"/>
<proteinExistence type="inferred from homology"/>
<reference key="1">
    <citation type="journal article" date="1988" name="J. Neurochem.">
        <title>Cloning of quail tyrosine hydroxylase: amino acid homology with other hydroxylases discloses functional domains.</title>
        <authorList>
            <person name="Fauquet M."/>
            <person name="Grima B."/>
            <person name="Lamouroux A."/>
            <person name="Mallet J."/>
        </authorList>
    </citation>
    <scope>NUCLEOTIDE SEQUENCE [GENOMIC DNA]</scope>
    <source>
        <tissue>Adrenal gland</tissue>
    </source>
</reference>
<reference key="2">
    <citation type="journal article" date="1993" name="J. Neurochem.">
        <title>The quail tyrosine hydroxylase gene promoter contains an active cyclic AMP-responsive element.</title>
        <authorList>
            <person name="Fauquet M."/>
            <person name="Boni C."/>
        </authorList>
    </citation>
    <scope>NUCLEOTIDE SEQUENCE [GENOMIC DNA] OF 1-30</scope>
</reference>